<feature type="chain" id="PRO_1000040546" description="6,7-dimethyl-8-ribityllumazine synthase">
    <location>
        <begin position="1"/>
        <end position="156"/>
    </location>
</feature>
<feature type="active site" description="Proton donor" evidence="1">
    <location>
        <position position="89"/>
    </location>
</feature>
<feature type="binding site" evidence="1">
    <location>
        <position position="22"/>
    </location>
    <ligand>
        <name>5-amino-6-(D-ribitylamino)uracil</name>
        <dbReference type="ChEBI" id="CHEBI:15934"/>
    </ligand>
</feature>
<feature type="binding site" evidence="1">
    <location>
        <begin position="57"/>
        <end position="59"/>
    </location>
    <ligand>
        <name>5-amino-6-(D-ribitylamino)uracil</name>
        <dbReference type="ChEBI" id="CHEBI:15934"/>
    </ligand>
</feature>
<feature type="binding site" evidence="1">
    <location>
        <begin position="81"/>
        <end position="83"/>
    </location>
    <ligand>
        <name>5-amino-6-(D-ribitylamino)uracil</name>
        <dbReference type="ChEBI" id="CHEBI:15934"/>
    </ligand>
</feature>
<feature type="binding site" evidence="1">
    <location>
        <begin position="86"/>
        <end position="87"/>
    </location>
    <ligand>
        <name>(2S)-2-hydroxy-3-oxobutyl phosphate</name>
        <dbReference type="ChEBI" id="CHEBI:58830"/>
    </ligand>
</feature>
<feature type="binding site" evidence="1">
    <location>
        <position position="114"/>
    </location>
    <ligand>
        <name>5-amino-6-(D-ribitylamino)uracil</name>
        <dbReference type="ChEBI" id="CHEBI:15934"/>
    </ligand>
</feature>
<feature type="binding site" evidence="1">
    <location>
        <position position="128"/>
    </location>
    <ligand>
        <name>(2S)-2-hydroxy-3-oxobutyl phosphate</name>
        <dbReference type="ChEBI" id="CHEBI:58830"/>
    </ligand>
</feature>
<accession>A7MWU0</accession>
<protein>
    <recommendedName>
        <fullName evidence="1">6,7-dimethyl-8-ribityllumazine synthase</fullName>
        <shortName evidence="1">DMRL synthase</shortName>
        <shortName evidence="1">LS</shortName>
        <shortName evidence="1">Lumazine synthase</shortName>
        <ecNumber evidence="1">2.5.1.78</ecNumber>
    </recommendedName>
</protein>
<organism>
    <name type="scientific">Vibrio campbellii (strain ATCC BAA-1116)</name>
    <dbReference type="NCBI Taxonomy" id="2902295"/>
    <lineage>
        <taxon>Bacteria</taxon>
        <taxon>Pseudomonadati</taxon>
        <taxon>Pseudomonadota</taxon>
        <taxon>Gammaproteobacteria</taxon>
        <taxon>Vibrionales</taxon>
        <taxon>Vibrionaceae</taxon>
        <taxon>Vibrio</taxon>
    </lineage>
</organism>
<sequence>MKVIEGGFPAPNAKIAIVISRFNSFINESLLSGAIDTLKRHGQVSEDNITVVRCPGAVELPLVAQRVAKTGKYDAIVSLGTVIRGGTPHFDYVCSECNKGLAQVSLEYSLPVAFGVLTVDTIDQAIERAGTKAGNKGAEAALSALEMINVLSEIDS</sequence>
<evidence type="ECO:0000255" key="1">
    <source>
        <dbReference type="HAMAP-Rule" id="MF_00178"/>
    </source>
</evidence>
<reference key="1">
    <citation type="submission" date="2007-08" db="EMBL/GenBank/DDBJ databases">
        <authorList>
            <consortium name="The Vibrio harveyi Genome Sequencing Project"/>
            <person name="Bassler B."/>
            <person name="Clifton S.W."/>
            <person name="Fulton L."/>
            <person name="Delehaunty K."/>
            <person name="Fronick C."/>
            <person name="Harrison M."/>
            <person name="Markivic C."/>
            <person name="Fulton R."/>
            <person name="Tin-Wollam A.-M."/>
            <person name="Shah N."/>
            <person name="Pepin K."/>
            <person name="Nash W."/>
            <person name="Thiruvilangam P."/>
            <person name="Bhonagiri V."/>
            <person name="Waters C."/>
            <person name="Tu K.C."/>
            <person name="Irgon J."/>
            <person name="Wilson R.K."/>
        </authorList>
    </citation>
    <scope>NUCLEOTIDE SEQUENCE [LARGE SCALE GENOMIC DNA]</scope>
    <source>
        <strain>ATCC BAA-1116 / BB120</strain>
    </source>
</reference>
<name>RISB_VIBC1</name>
<comment type="function">
    <text evidence="1">Catalyzes the formation of 6,7-dimethyl-8-ribityllumazine by condensation of 5-amino-6-(D-ribitylamino)uracil with 3,4-dihydroxy-2-butanone 4-phosphate. This is the penultimate step in the biosynthesis of riboflavin.</text>
</comment>
<comment type="catalytic activity">
    <reaction evidence="1">
        <text>(2S)-2-hydroxy-3-oxobutyl phosphate + 5-amino-6-(D-ribitylamino)uracil = 6,7-dimethyl-8-(1-D-ribityl)lumazine + phosphate + 2 H2O + H(+)</text>
        <dbReference type="Rhea" id="RHEA:26152"/>
        <dbReference type="ChEBI" id="CHEBI:15377"/>
        <dbReference type="ChEBI" id="CHEBI:15378"/>
        <dbReference type="ChEBI" id="CHEBI:15934"/>
        <dbReference type="ChEBI" id="CHEBI:43474"/>
        <dbReference type="ChEBI" id="CHEBI:58201"/>
        <dbReference type="ChEBI" id="CHEBI:58830"/>
        <dbReference type="EC" id="2.5.1.78"/>
    </reaction>
</comment>
<comment type="pathway">
    <text evidence="1">Cofactor biosynthesis; riboflavin biosynthesis; riboflavin from 2-hydroxy-3-oxobutyl phosphate and 5-amino-6-(D-ribitylamino)uracil: step 1/2.</text>
</comment>
<comment type="subunit">
    <text evidence="1">Forms an icosahedral capsid composed of 60 subunits, arranged as a dodecamer of pentamers.</text>
</comment>
<comment type="similarity">
    <text evidence="1">Belongs to the DMRL synthase family.</text>
</comment>
<keyword id="KW-0686">Riboflavin biosynthesis</keyword>
<keyword id="KW-0808">Transferase</keyword>
<proteinExistence type="inferred from homology"/>
<gene>
    <name evidence="1" type="primary">ribH</name>
    <name type="ordered locus">VIBHAR_01169</name>
</gene>
<dbReference type="EC" id="2.5.1.78" evidence="1"/>
<dbReference type="EMBL" id="CP000789">
    <property type="protein sequence ID" value="ABU70159.1"/>
    <property type="molecule type" value="Genomic_DNA"/>
</dbReference>
<dbReference type="SMR" id="A7MWU0"/>
<dbReference type="KEGG" id="vha:VIBHAR_01169"/>
<dbReference type="PATRIC" id="fig|338187.25.peg.1460"/>
<dbReference type="UniPathway" id="UPA00275">
    <property type="reaction ID" value="UER00404"/>
</dbReference>
<dbReference type="Proteomes" id="UP000008152">
    <property type="component" value="Chromosome I"/>
</dbReference>
<dbReference type="GO" id="GO:0005829">
    <property type="term" value="C:cytosol"/>
    <property type="evidence" value="ECO:0007669"/>
    <property type="project" value="TreeGrafter"/>
</dbReference>
<dbReference type="GO" id="GO:0009349">
    <property type="term" value="C:riboflavin synthase complex"/>
    <property type="evidence" value="ECO:0007669"/>
    <property type="project" value="InterPro"/>
</dbReference>
<dbReference type="GO" id="GO:0000906">
    <property type="term" value="F:6,7-dimethyl-8-ribityllumazine synthase activity"/>
    <property type="evidence" value="ECO:0007669"/>
    <property type="project" value="UniProtKB-UniRule"/>
</dbReference>
<dbReference type="GO" id="GO:0009231">
    <property type="term" value="P:riboflavin biosynthetic process"/>
    <property type="evidence" value="ECO:0007669"/>
    <property type="project" value="UniProtKB-UniRule"/>
</dbReference>
<dbReference type="CDD" id="cd09209">
    <property type="entry name" value="Lumazine_synthase-I"/>
    <property type="match status" value="1"/>
</dbReference>
<dbReference type="FunFam" id="3.40.50.960:FF:000001">
    <property type="entry name" value="6,7-dimethyl-8-ribityllumazine synthase"/>
    <property type="match status" value="1"/>
</dbReference>
<dbReference type="Gene3D" id="3.40.50.960">
    <property type="entry name" value="Lumazine/riboflavin synthase"/>
    <property type="match status" value="1"/>
</dbReference>
<dbReference type="HAMAP" id="MF_00178">
    <property type="entry name" value="Lumazine_synth"/>
    <property type="match status" value="1"/>
</dbReference>
<dbReference type="InterPro" id="IPR034964">
    <property type="entry name" value="LS"/>
</dbReference>
<dbReference type="InterPro" id="IPR002180">
    <property type="entry name" value="LS/RS"/>
</dbReference>
<dbReference type="InterPro" id="IPR036467">
    <property type="entry name" value="LS/RS_sf"/>
</dbReference>
<dbReference type="NCBIfam" id="TIGR00114">
    <property type="entry name" value="lumazine-synth"/>
    <property type="match status" value="1"/>
</dbReference>
<dbReference type="NCBIfam" id="NF000812">
    <property type="entry name" value="PRK00061.1-4"/>
    <property type="match status" value="1"/>
</dbReference>
<dbReference type="PANTHER" id="PTHR21058:SF0">
    <property type="entry name" value="6,7-DIMETHYL-8-RIBITYLLUMAZINE SYNTHASE"/>
    <property type="match status" value="1"/>
</dbReference>
<dbReference type="PANTHER" id="PTHR21058">
    <property type="entry name" value="6,7-DIMETHYL-8-RIBITYLLUMAZINE SYNTHASE DMRL SYNTHASE LUMAZINE SYNTHASE"/>
    <property type="match status" value="1"/>
</dbReference>
<dbReference type="Pfam" id="PF00885">
    <property type="entry name" value="DMRL_synthase"/>
    <property type="match status" value="1"/>
</dbReference>
<dbReference type="SUPFAM" id="SSF52121">
    <property type="entry name" value="Lumazine synthase"/>
    <property type="match status" value="1"/>
</dbReference>